<comment type="function">
    <text evidence="3 4 6 8 9">Thiol-specific peroxidase that catalyzes the reduction of hydrogen peroxide and organic hydroperoxides to water and alcohols, respectively. Plays a role in cell protection against oxidative stress by detoxifying peroxides and as sensor of hydrogen peroxide-mediated signaling events (PubMed:17409354, PubMed:20356456). Relays hydrogen peroxide as a signal to the transcription factor pap1 by inducing the formation of intramolecular disulfide bonds in pap1, which causes its nuclear accumulation and activation (PubMed:15824112, PubMed:24316080). Reduced by srx1 and this regulation acts as a molecular switch controlling the transcriptional response to hydrogen peroxide (PubMed:15956211).</text>
</comment>
<comment type="catalytic activity">
    <reaction evidence="8">
        <text>a hydroperoxide + [thioredoxin]-dithiol = an alcohol + [thioredoxin]-disulfide + H2O</text>
        <dbReference type="Rhea" id="RHEA:62620"/>
        <dbReference type="Rhea" id="RHEA-COMP:10698"/>
        <dbReference type="Rhea" id="RHEA-COMP:10700"/>
        <dbReference type="ChEBI" id="CHEBI:15377"/>
        <dbReference type="ChEBI" id="CHEBI:29950"/>
        <dbReference type="ChEBI" id="CHEBI:30879"/>
        <dbReference type="ChEBI" id="CHEBI:35924"/>
        <dbReference type="ChEBI" id="CHEBI:50058"/>
        <dbReference type="EC" id="1.11.1.24"/>
    </reaction>
</comment>
<comment type="subunit">
    <text evidence="2 3 8 9">Homodimer; disulfide-linked, upon oxidation (PubMed:11795888, PubMed:20356456, PubMed:24316080). Interacts with srx1 in response to oxidative stress (PubMed:15824112). Interacts with pap1 via transient disulfide linkages (PubMed:24316080).</text>
</comment>
<comment type="subcellular location">
    <subcellularLocation>
        <location evidence="5 9">Cytoplasm</location>
    </subcellularLocation>
    <subcellularLocation>
        <location evidence="5">Nucleus</location>
    </subcellularLocation>
</comment>
<comment type="PTM">
    <text evidence="3 4">The enzyme can be inactivated by further oxidation of the cysteine sulfenic acid (C(P)-SOH) to sulphinic acid (C(P)-SO2H) instead of its condensation to a disulfide bond. It can be reactivated by forming a transient disulfide bond with sulfiredoxin srx1, which reduces the cysteine sulfinic acid in an ATP- and Mg-dependent manner.</text>
</comment>
<comment type="miscellaneous">
    <text evidence="12">The active site is a conserved redox-active cysteine residue, the peroxidatic cysteine (C(P)), which makes the nucleophilic attack on the peroxide substrate. The peroxide oxidizes the C(P)-SH to cysteine sulfenic acid (C(P)-SOH), which then reacts with another cysteine residue, the resolving cysteine (C(R)), to form a disulfide bridge. The disulfide is subsequently reduced by an appropriate electron donor to complete the catalytic cycle. In the typical 2-Cys AhpC/Prx1 family, C(R) is provided by the other dimeric subunit to form an intersubunit disulfide. The disulfide is subsequently reduced by thioredoxin.</text>
</comment>
<comment type="similarity">
    <text evidence="11">Belongs to the peroxiredoxin family. AhpC/Prx1 subfamily.</text>
</comment>
<evidence type="ECO:0000255" key="1">
    <source>
        <dbReference type="PROSITE-ProRule" id="PRU00691"/>
    </source>
</evidence>
<evidence type="ECO:0000269" key="2">
    <source>
    </source>
</evidence>
<evidence type="ECO:0000269" key="3">
    <source>
    </source>
</evidence>
<evidence type="ECO:0000269" key="4">
    <source>
    </source>
</evidence>
<evidence type="ECO:0000269" key="5">
    <source>
    </source>
</evidence>
<evidence type="ECO:0000269" key="6">
    <source>
    </source>
</evidence>
<evidence type="ECO:0000269" key="7">
    <source>
    </source>
</evidence>
<evidence type="ECO:0000269" key="8">
    <source>
    </source>
</evidence>
<evidence type="ECO:0000269" key="9">
    <source>
    </source>
</evidence>
<evidence type="ECO:0000303" key="10">
    <source>
    </source>
</evidence>
<evidence type="ECO:0000305" key="11"/>
<evidence type="ECO:0000305" key="12">
    <source>
    </source>
</evidence>
<dbReference type="EC" id="1.11.1.24" evidence="8"/>
<dbReference type="EMBL" id="AF083335">
    <property type="protein sequence ID" value="AAC71013.1"/>
    <property type="molecule type" value="mRNA"/>
</dbReference>
<dbReference type="EMBL" id="CU329672">
    <property type="protein sequence ID" value="CAA21182.1"/>
    <property type="molecule type" value="Genomic_DNA"/>
</dbReference>
<dbReference type="PIR" id="T41413">
    <property type="entry name" value="T41413"/>
</dbReference>
<dbReference type="RefSeq" id="NP_588430.1">
    <property type="nucleotide sequence ID" value="NM_001023421.2"/>
</dbReference>
<dbReference type="SMR" id="O74887"/>
<dbReference type="BioGRID" id="276132">
    <property type="interactions" value="20"/>
</dbReference>
<dbReference type="FunCoup" id="O74887">
    <property type="interactions" value="610"/>
</dbReference>
<dbReference type="IntAct" id="O74887">
    <property type="interactions" value="3"/>
</dbReference>
<dbReference type="MINT" id="O74887"/>
<dbReference type="STRING" id="284812.O74887"/>
<dbReference type="PeroxiBase" id="4483">
    <property type="entry name" value="Spom2CysPrx"/>
</dbReference>
<dbReference type="TCDB" id="8.A.147.1.1">
    <property type="family name" value="the peroxiredoxin heme-binding protein, tpx1 (tpx1) family"/>
</dbReference>
<dbReference type="iPTMnet" id="O74887"/>
<dbReference type="PaxDb" id="4896-SPCC576.03c.1"/>
<dbReference type="EnsemblFungi" id="SPCC576.03c.1">
    <property type="protein sequence ID" value="SPCC576.03c.1:pep"/>
    <property type="gene ID" value="SPCC576.03c"/>
</dbReference>
<dbReference type="GeneID" id="2539572"/>
<dbReference type="KEGG" id="spo:2539572"/>
<dbReference type="PomBase" id="SPCC576.03c">
    <property type="gene designation" value="tpx1"/>
</dbReference>
<dbReference type="VEuPathDB" id="FungiDB:SPCC576.03c"/>
<dbReference type="eggNOG" id="KOG0852">
    <property type="taxonomic scope" value="Eukaryota"/>
</dbReference>
<dbReference type="HOGENOM" id="CLU_042529_21_0_1"/>
<dbReference type="InParanoid" id="O74887"/>
<dbReference type="OMA" id="FWYPKDF"/>
<dbReference type="PhylomeDB" id="O74887"/>
<dbReference type="BRENDA" id="1.11.1.24">
    <property type="organism ID" value="5613"/>
</dbReference>
<dbReference type="Reactome" id="R-SPO-3299685">
    <property type="pathway name" value="Detoxification of Reactive Oxygen Species"/>
</dbReference>
<dbReference type="Reactome" id="R-SPO-5628897">
    <property type="pathway name" value="TP53 Regulates Metabolic Genes"/>
</dbReference>
<dbReference type="Reactome" id="R-SPO-6798695">
    <property type="pathway name" value="Neutrophil degranulation"/>
</dbReference>
<dbReference type="Reactome" id="R-SPO-9818027">
    <property type="pathway name" value="NFE2L2 regulating anti-oxidant/detoxification enzymes"/>
</dbReference>
<dbReference type="PRO" id="PR:O74887"/>
<dbReference type="Proteomes" id="UP000002485">
    <property type="component" value="Chromosome III"/>
</dbReference>
<dbReference type="GO" id="GO:0005737">
    <property type="term" value="C:cytoplasm"/>
    <property type="evidence" value="ECO:0000314"/>
    <property type="project" value="PomBase"/>
</dbReference>
<dbReference type="GO" id="GO:0005829">
    <property type="term" value="C:cytosol"/>
    <property type="evidence" value="ECO:0007005"/>
    <property type="project" value="PomBase"/>
</dbReference>
<dbReference type="GO" id="GO:0005634">
    <property type="term" value="C:nucleus"/>
    <property type="evidence" value="ECO:0007005"/>
    <property type="project" value="PomBase"/>
</dbReference>
<dbReference type="GO" id="GO:0005078">
    <property type="term" value="F:MAP-kinase scaffold activity"/>
    <property type="evidence" value="ECO:0000269"/>
    <property type="project" value="PomBase"/>
</dbReference>
<dbReference type="GO" id="GO:0004601">
    <property type="term" value="F:peroxidase activity"/>
    <property type="evidence" value="ECO:0000314"/>
    <property type="project" value="PomBase"/>
</dbReference>
<dbReference type="GO" id="GO:0051920">
    <property type="term" value="F:peroxiredoxin activity"/>
    <property type="evidence" value="ECO:0000314"/>
    <property type="project" value="PomBase"/>
</dbReference>
<dbReference type="GO" id="GO:0015035">
    <property type="term" value="F:protein-disulfide reductase activity"/>
    <property type="evidence" value="ECO:0000269"/>
    <property type="project" value="PomBase"/>
</dbReference>
<dbReference type="GO" id="GO:0008379">
    <property type="term" value="F:thioredoxin peroxidase activity"/>
    <property type="evidence" value="ECO:0000315"/>
    <property type="project" value="PomBase"/>
</dbReference>
<dbReference type="GO" id="GO:0140824">
    <property type="term" value="F:thioredoxin-dependent peroxiredoxin activity"/>
    <property type="evidence" value="ECO:0000314"/>
    <property type="project" value="PomBase"/>
</dbReference>
<dbReference type="GO" id="GO:0051082">
    <property type="term" value="F:unfolded protein binding"/>
    <property type="evidence" value="ECO:0000314"/>
    <property type="project" value="PomBase"/>
</dbReference>
<dbReference type="GO" id="GO:0045454">
    <property type="term" value="P:cell redox homeostasis"/>
    <property type="evidence" value="ECO:0000315"/>
    <property type="project" value="PomBase"/>
</dbReference>
<dbReference type="GO" id="GO:0061692">
    <property type="term" value="P:cellular detoxification of hydrogen peroxide"/>
    <property type="evidence" value="ECO:0000315"/>
    <property type="project" value="PomBase"/>
</dbReference>
<dbReference type="GO" id="GO:0042744">
    <property type="term" value="P:hydrogen peroxide catabolic process"/>
    <property type="evidence" value="ECO:0000315"/>
    <property type="project" value="PomBase"/>
</dbReference>
<dbReference type="GO" id="GO:0000122">
    <property type="term" value="P:negative regulation of transcription by RNA polymerase II"/>
    <property type="evidence" value="ECO:0000315"/>
    <property type="project" value="PomBase"/>
</dbReference>
<dbReference type="GO" id="GO:1900745">
    <property type="term" value="P:positive regulation of p38MAPK cascade"/>
    <property type="evidence" value="ECO:0000315"/>
    <property type="project" value="PomBase"/>
</dbReference>
<dbReference type="GO" id="GO:0045944">
    <property type="term" value="P:positive regulation of transcription by RNA polymerase II"/>
    <property type="evidence" value="ECO:0000315"/>
    <property type="project" value="PomBase"/>
</dbReference>
<dbReference type="GO" id="GO:0006979">
    <property type="term" value="P:response to oxidative stress"/>
    <property type="evidence" value="ECO:0000318"/>
    <property type="project" value="GO_Central"/>
</dbReference>
<dbReference type="CDD" id="cd03015">
    <property type="entry name" value="PRX_Typ2cys"/>
    <property type="match status" value="1"/>
</dbReference>
<dbReference type="FunFam" id="3.40.30.10:FF:000003">
    <property type="entry name" value="Peroxiredoxin 1"/>
    <property type="match status" value="1"/>
</dbReference>
<dbReference type="Gene3D" id="3.40.30.10">
    <property type="entry name" value="Glutaredoxin"/>
    <property type="match status" value="1"/>
</dbReference>
<dbReference type="InterPro" id="IPR000866">
    <property type="entry name" value="AhpC/TSA"/>
</dbReference>
<dbReference type="InterPro" id="IPR050217">
    <property type="entry name" value="Peroxiredoxin"/>
</dbReference>
<dbReference type="InterPro" id="IPR024706">
    <property type="entry name" value="Peroxiredoxin_AhpC-typ"/>
</dbReference>
<dbReference type="InterPro" id="IPR019479">
    <property type="entry name" value="Peroxiredoxin_C"/>
</dbReference>
<dbReference type="InterPro" id="IPR036249">
    <property type="entry name" value="Thioredoxin-like_sf"/>
</dbReference>
<dbReference type="InterPro" id="IPR013766">
    <property type="entry name" value="Thioredoxin_domain"/>
</dbReference>
<dbReference type="PANTHER" id="PTHR10681:SF171">
    <property type="entry name" value="PEROXIREDOXIN 4"/>
    <property type="match status" value="1"/>
</dbReference>
<dbReference type="PANTHER" id="PTHR10681">
    <property type="entry name" value="THIOREDOXIN PEROXIDASE"/>
    <property type="match status" value="1"/>
</dbReference>
<dbReference type="Pfam" id="PF10417">
    <property type="entry name" value="1-cysPrx_C"/>
    <property type="match status" value="1"/>
</dbReference>
<dbReference type="Pfam" id="PF00578">
    <property type="entry name" value="AhpC-TSA"/>
    <property type="match status" value="1"/>
</dbReference>
<dbReference type="PIRSF" id="PIRSF000239">
    <property type="entry name" value="AHPC"/>
    <property type="match status" value="1"/>
</dbReference>
<dbReference type="SUPFAM" id="SSF52833">
    <property type="entry name" value="Thioredoxin-like"/>
    <property type="match status" value="1"/>
</dbReference>
<dbReference type="PROSITE" id="PS51352">
    <property type="entry name" value="THIOREDOXIN_2"/>
    <property type="match status" value="1"/>
</dbReference>
<protein>
    <recommendedName>
        <fullName evidence="10">Peroxiredoxin tpx1</fullName>
        <ecNumber evidence="8">1.11.1.24</ecNumber>
    </recommendedName>
    <alternativeName>
        <fullName evidence="10">Thioredoxin peroxidase</fullName>
        <shortName evidence="10">TPx</shortName>
    </alternativeName>
    <alternativeName>
        <fullName evidence="11">Thioredoxin-dependent peroxiredoxin tpx1</fullName>
    </alternativeName>
</protein>
<keyword id="KW-0049">Antioxidant</keyword>
<keyword id="KW-0963">Cytoplasm</keyword>
<keyword id="KW-1015">Disulfide bond</keyword>
<keyword id="KW-0539">Nucleus</keyword>
<keyword id="KW-0560">Oxidoreductase</keyword>
<keyword id="KW-0575">Peroxidase</keyword>
<keyword id="KW-0597">Phosphoprotein</keyword>
<keyword id="KW-0676">Redox-active center</keyword>
<keyword id="KW-1185">Reference proteome</keyword>
<feature type="chain" id="PRO_0000351076" description="Peroxiredoxin tpx1">
    <location>
        <begin position="1"/>
        <end position="192"/>
    </location>
</feature>
<feature type="domain" description="Thioredoxin" evidence="1">
    <location>
        <begin position="3"/>
        <end position="161"/>
    </location>
</feature>
<feature type="active site" description="Cysteine sulfenic acid (-SOH) intermediate" evidence="12">
    <location>
        <position position="48"/>
    </location>
</feature>
<feature type="modified residue" description="Phosphoserine" evidence="7">
    <location>
        <position position="105"/>
    </location>
</feature>
<feature type="modified residue" description="Phosphoserine" evidence="7">
    <location>
        <position position="148"/>
    </location>
</feature>
<feature type="disulfide bond" description="Interchain (with C-169); in linked form" evidence="9">
    <location>
        <position position="48"/>
    </location>
</feature>
<feature type="disulfide bond" description="Interchain (with C-30 in TRX1); transient" evidence="9">
    <location>
        <position position="169"/>
    </location>
</feature>
<feature type="disulfide bond" description="Interchain (with C-48); in linked form" evidence="9">
    <location>
        <position position="169"/>
    </location>
</feature>
<feature type="mutagenesis site" description="No nuclear accumulation of pap1." evidence="3">
    <original>C</original>
    <variation>S</variation>
    <location>
        <position position="48"/>
    </location>
</feature>
<feature type="mutagenesis site" description="No nuclear accumulation of pap1." evidence="3">
    <original>C</original>
    <variation>S</variation>
    <location>
        <position position="169"/>
    </location>
</feature>
<feature type="mutagenesis site" description="Peroxide reduction reduced." evidence="2">
    <original>K</original>
    <variation>D</variation>
    <location>
        <position position="191"/>
    </location>
</feature>
<feature type="mutagenesis site" description="Inactivated by 1 mM H(2)O(2)." evidence="2">
    <original>K</original>
    <variation>R</variation>
    <location>
        <position position="191"/>
    </location>
</feature>
<feature type="mutagenesis site" description="Peroxide reduction reduced." evidence="2">
    <original>H</original>
    <variation>E</variation>
    <variation>G</variation>
    <variation>K</variation>
    <variation>L</variation>
    <variation>Q</variation>
    <variation>Y</variation>
    <location>
        <position position="192"/>
    </location>
</feature>
<name>TPX1_SCHPO</name>
<organism>
    <name type="scientific">Schizosaccharomyces pombe (strain 972 / ATCC 24843)</name>
    <name type="common">Fission yeast</name>
    <dbReference type="NCBI Taxonomy" id="284812"/>
    <lineage>
        <taxon>Eukaryota</taxon>
        <taxon>Fungi</taxon>
        <taxon>Dikarya</taxon>
        <taxon>Ascomycota</taxon>
        <taxon>Taphrinomycotina</taxon>
        <taxon>Schizosaccharomycetes</taxon>
        <taxon>Schizosaccharomycetales</taxon>
        <taxon>Schizosaccharomycetaceae</taxon>
        <taxon>Schizosaccharomyces</taxon>
    </lineage>
</organism>
<proteinExistence type="evidence at protein level"/>
<gene>
    <name type="primary">tpx1</name>
    <name type="synonym">tsa1</name>
    <name type="ORF">SPCC576.03c</name>
</gene>
<reference key="1">
    <citation type="journal article" date="2002" name="Arch. Biochem. Biophys.">
        <title>Regulation of thioredoxin peroxidase activity by C-terminal truncation.</title>
        <authorList>
            <person name="Koo K.H."/>
            <person name="Lee S."/>
            <person name="Jeong S.Y."/>
            <person name="Kim E.T."/>
            <person name="Kim H.J."/>
            <person name="Kim K."/>
            <person name="Song K."/>
            <person name="Chae H.Z."/>
        </authorList>
    </citation>
    <scope>NUCLEOTIDE SEQUENCE [MRNA]</scope>
    <scope>FUNCTION</scope>
    <scope>SUBUNIT</scope>
    <scope>MUTAGENESIS OF LYS-191 AND HIS-192</scope>
</reference>
<reference key="2">
    <citation type="journal article" date="2002" name="Nature">
        <title>The genome sequence of Schizosaccharomyces pombe.</title>
        <authorList>
            <person name="Wood V."/>
            <person name="Gwilliam R."/>
            <person name="Rajandream M.A."/>
            <person name="Lyne M.H."/>
            <person name="Lyne R."/>
            <person name="Stewart A."/>
            <person name="Sgouros J.G."/>
            <person name="Peat N."/>
            <person name="Hayles J."/>
            <person name="Baker S.G."/>
            <person name="Basham D."/>
            <person name="Bowman S."/>
            <person name="Brooks K."/>
            <person name="Brown D."/>
            <person name="Brown S."/>
            <person name="Chillingworth T."/>
            <person name="Churcher C.M."/>
            <person name="Collins M."/>
            <person name="Connor R."/>
            <person name="Cronin A."/>
            <person name="Davis P."/>
            <person name="Feltwell T."/>
            <person name="Fraser A."/>
            <person name="Gentles S."/>
            <person name="Goble A."/>
            <person name="Hamlin N."/>
            <person name="Harris D.E."/>
            <person name="Hidalgo J."/>
            <person name="Hodgson G."/>
            <person name="Holroyd S."/>
            <person name="Hornsby T."/>
            <person name="Howarth S."/>
            <person name="Huckle E.J."/>
            <person name="Hunt S."/>
            <person name="Jagels K."/>
            <person name="James K.D."/>
            <person name="Jones L."/>
            <person name="Jones M."/>
            <person name="Leather S."/>
            <person name="McDonald S."/>
            <person name="McLean J."/>
            <person name="Mooney P."/>
            <person name="Moule S."/>
            <person name="Mungall K.L."/>
            <person name="Murphy L.D."/>
            <person name="Niblett D."/>
            <person name="Odell C."/>
            <person name="Oliver K."/>
            <person name="O'Neil S."/>
            <person name="Pearson D."/>
            <person name="Quail M.A."/>
            <person name="Rabbinowitsch E."/>
            <person name="Rutherford K.M."/>
            <person name="Rutter S."/>
            <person name="Saunders D."/>
            <person name="Seeger K."/>
            <person name="Sharp S."/>
            <person name="Skelton J."/>
            <person name="Simmonds M.N."/>
            <person name="Squares R."/>
            <person name="Squares S."/>
            <person name="Stevens K."/>
            <person name="Taylor K."/>
            <person name="Taylor R.G."/>
            <person name="Tivey A."/>
            <person name="Walsh S.V."/>
            <person name="Warren T."/>
            <person name="Whitehead S."/>
            <person name="Woodward J.R."/>
            <person name="Volckaert G."/>
            <person name="Aert R."/>
            <person name="Robben J."/>
            <person name="Grymonprez B."/>
            <person name="Weltjens I."/>
            <person name="Vanstreels E."/>
            <person name="Rieger M."/>
            <person name="Schaefer M."/>
            <person name="Mueller-Auer S."/>
            <person name="Gabel C."/>
            <person name="Fuchs M."/>
            <person name="Duesterhoeft A."/>
            <person name="Fritzc C."/>
            <person name="Holzer E."/>
            <person name="Moestl D."/>
            <person name="Hilbert H."/>
            <person name="Borzym K."/>
            <person name="Langer I."/>
            <person name="Beck A."/>
            <person name="Lehrach H."/>
            <person name="Reinhardt R."/>
            <person name="Pohl T.M."/>
            <person name="Eger P."/>
            <person name="Zimmermann W."/>
            <person name="Wedler H."/>
            <person name="Wambutt R."/>
            <person name="Purnelle B."/>
            <person name="Goffeau A."/>
            <person name="Cadieu E."/>
            <person name="Dreano S."/>
            <person name="Gloux S."/>
            <person name="Lelaure V."/>
            <person name="Mottier S."/>
            <person name="Galibert F."/>
            <person name="Aves S.J."/>
            <person name="Xiang Z."/>
            <person name="Hunt C."/>
            <person name="Moore K."/>
            <person name="Hurst S.M."/>
            <person name="Lucas M."/>
            <person name="Rochet M."/>
            <person name="Gaillardin C."/>
            <person name="Tallada V.A."/>
            <person name="Garzon A."/>
            <person name="Thode G."/>
            <person name="Daga R.R."/>
            <person name="Cruzado L."/>
            <person name="Jimenez J."/>
            <person name="Sanchez M."/>
            <person name="del Rey F."/>
            <person name="Benito J."/>
            <person name="Dominguez A."/>
            <person name="Revuelta J.L."/>
            <person name="Moreno S."/>
            <person name="Armstrong J."/>
            <person name="Forsburg S.L."/>
            <person name="Cerutti L."/>
            <person name="Lowe T."/>
            <person name="McCombie W.R."/>
            <person name="Paulsen I."/>
            <person name="Potashkin J."/>
            <person name="Shpakovski G.V."/>
            <person name="Ussery D."/>
            <person name="Barrell B.G."/>
            <person name="Nurse P."/>
        </authorList>
    </citation>
    <scope>NUCLEOTIDE SEQUENCE [LARGE SCALE GENOMIC DNA]</scope>
    <source>
        <strain>972 / ATCC 24843</strain>
    </source>
</reference>
<reference key="3">
    <citation type="journal article" date="2005" name="J. Biol. Chem.">
        <title>Oxidation of a eukaryotic 2-Cys peroxiredoxin is a molecular switch controlling the transcriptional response to increasing levels of hydrogen peroxide.</title>
        <authorList>
            <person name="Bozonet S.M."/>
            <person name="Findlay V.J."/>
            <person name="Day A.M."/>
            <person name="Cameron J."/>
            <person name="Veal E.A."/>
            <person name="Morgan B.A."/>
        </authorList>
    </citation>
    <scope>FUNCTION</scope>
    <scope>INTERACTION WITH SRX1</scope>
    <scope>MUTAGENESIS OF CYS-48 AND CYS-169</scope>
</reference>
<reference key="4">
    <citation type="journal article" date="2005" name="Proc. Natl. Acad. Sci. U.S.A.">
        <title>A cysteine-sulfinic acid in peroxiredoxin regulates H2O2-sensing by the antioxidant Pap1 pathway.</title>
        <authorList>
            <person name="Vivancos A.P."/>
            <person name="Castillo E.A."/>
            <person name="Biteau B."/>
            <person name="Nicot C."/>
            <person name="Ayte J."/>
            <person name="Toledano M.B."/>
            <person name="Hidalgo E."/>
        </authorList>
    </citation>
    <scope>FUNCTION</scope>
</reference>
<reference key="5">
    <citation type="journal article" date="2006" name="Nat. Biotechnol.">
        <title>ORFeome cloning and global analysis of protein localization in the fission yeast Schizosaccharomyces pombe.</title>
        <authorList>
            <person name="Matsuyama A."/>
            <person name="Arai R."/>
            <person name="Yashiroda Y."/>
            <person name="Shirai A."/>
            <person name="Kamata A."/>
            <person name="Sekido S."/>
            <person name="Kobayashi Y."/>
            <person name="Hashimoto A."/>
            <person name="Hamamoto M."/>
            <person name="Hiraoka Y."/>
            <person name="Horinouchi S."/>
            <person name="Yoshida M."/>
        </authorList>
    </citation>
    <scope>SUBCELLULAR LOCATION [LARGE SCALE ANALYSIS]</scope>
</reference>
<reference key="6">
    <citation type="journal article" date="2007" name="Mol. Biol. Cell">
        <title>The peroxiredoxin Tpx1 is essential as a H2O2 scavenger during aerobic growth in fission yeast.</title>
        <authorList>
            <person name="Jara M."/>
            <person name="Vivancos A.P."/>
            <person name="Calvo I.A."/>
            <person name="Moldon A."/>
            <person name="Sanso M."/>
            <person name="Hidalgo E."/>
        </authorList>
    </citation>
    <scope>FUNCTION</scope>
</reference>
<reference key="7">
    <citation type="journal article" date="2008" name="J. Proteome Res.">
        <title>Phosphoproteome analysis of fission yeast.</title>
        <authorList>
            <person name="Wilson-Grady J.T."/>
            <person name="Villen J."/>
            <person name="Gygi S.P."/>
        </authorList>
    </citation>
    <scope>PHOSPHORYLATION [LARGE SCALE ANALYSIS] AT SER-105 AND SER-148</scope>
    <scope>IDENTIFICATION BY MASS SPECTROMETRY</scope>
</reference>
<reference key="8">
    <citation type="journal article" date="2010" name="BMB Rep.">
        <title>Distinct functional roles of peroxiredoxin isozymes and glutathione peroxidase from fission yeast, Schizosaccharomyces pombe.</title>
        <authorList>
            <person name="Kim J.S."/>
            <person name="Bang M.A."/>
            <person name="Lee S."/>
            <person name="Chae H.Z."/>
            <person name="Kim K."/>
        </authorList>
    </citation>
    <scope>FUNCTION</scope>
    <scope>CATALYTIC ACTIVITY</scope>
    <scope>SUBUNIT</scope>
</reference>
<reference key="9">
    <citation type="journal article" date="2013" name="Cell Rep.">
        <title>Dissection of a redox relay: H2O2-dependent activation of the transcription factor Pap1 through the peroxidatic Tpx1-thioredoxin cycle.</title>
        <authorList>
            <person name="Calvo I.A."/>
            <person name="Boronat S."/>
            <person name="Domenech A."/>
            <person name="Garcia-Santamarina S."/>
            <person name="Ayte J."/>
            <person name="Hidalgo E."/>
        </authorList>
    </citation>
    <scope>FUNCTION</scope>
    <scope>INTERACTION WITH PAP1</scope>
    <scope>SUBCELLULAR LOCATION</scope>
    <scope>SUBUNIT</scope>
    <scope>DISULFIDE BONDS</scope>
</reference>
<sequence length="192" mass="21191">MSLQIGKPAPDFKGTAVVNGAFEEIKLADYKGKWVFLGFYPLDFTFVCPTEIVAFSEAASKFAERNAQVILTSTDSEYSHLAFINTPRKEGGLGGINIPLLADPSHKVSRDYGVLIEDAGVAFRGLFLIDPKGVLRQITINDLPVGRSVDEALRLLDAFQFVEEHGEVCPANWHKGSDTIDTKNPEKYFSKH</sequence>
<accession>O74887</accession>